<keyword id="KW-0106">Calcium</keyword>
<keyword id="KW-1003">Cell membrane</keyword>
<keyword id="KW-0378">Hydrolase</keyword>
<keyword id="KW-0442">Lipid degradation</keyword>
<keyword id="KW-0443">Lipid metabolism</keyword>
<keyword id="KW-0472">Membrane</keyword>
<keyword id="KW-0479">Metal-binding</keyword>
<keyword id="KW-1185">Reference proteome</keyword>
<keyword id="KW-0677">Repeat</keyword>
<feature type="chain" id="PRO_0000218816" description="Phospholipase D alpha 4">
    <location>
        <begin position="1"/>
        <end position="762"/>
    </location>
</feature>
<feature type="domain" description="C2" evidence="2">
    <location>
        <begin position="1"/>
        <end position="116"/>
    </location>
</feature>
<feature type="domain" description="PLD phosphodiesterase 1" evidence="3">
    <location>
        <begin position="301"/>
        <end position="339"/>
    </location>
</feature>
<feature type="domain" description="PLD phosphodiesterase 2" evidence="3">
    <location>
        <begin position="610"/>
        <end position="637"/>
    </location>
</feature>
<feature type="active site" evidence="3">
    <location>
        <position position="306"/>
    </location>
</feature>
<feature type="active site" evidence="3">
    <location>
        <position position="308"/>
    </location>
</feature>
<feature type="active site" evidence="3">
    <location>
        <position position="313"/>
    </location>
</feature>
<feature type="active site" evidence="3">
    <location>
        <position position="615"/>
    </location>
</feature>
<feature type="active site" evidence="3">
    <location>
        <position position="617"/>
    </location>
</feature>
<feature type="active site" evidence="3">
    <location>
        <position position="622"/>
    </location>
</feature>
<feature type="binding site" evidence="1">
    <location>
        <position position="172"/>
    </location>
    <ligand>
        <name>Ca(2+)</name>
        <dbReference type="ChEBI" id="CHEBI:29108"/>
    </ligand>
</feature>
<feature type="binding site" evidence="1">
    <location>
        <position position="306"/>
    </location>
    <ligand>
        <name>a 1,2-diacyl-sn-glycero-3-phosphate</name>
        <dbReference type="ChEBI" id="CHEBI:58608"/>
    </ligand>
</feature>
<feature type="binding site" evidence="1">
    <location>
        <position position="345"/>
    </location>
    <ligand>
        <name>Ca(2+)</name>
        <dbReference type="ChEBI" id="CHEBI:29108"/>
    </ligand>
</feature>
<feature type="binding site" evidence="1">
    <location>
        <position position="377"/>
    </location>
    <ligand>
        <name>Ca(2+)</name>
        <dbReference type="ChEBI" id="CHEBI:29108"/>
    </ligand>
</feature>
<feature type="binding site" evidence="1">
    <location>
        <position position="477"/>
    </location>
    <ligand>
        <name>a 1,2-diacyl-sn-glycero-3-phosphate</name>
        <dbReference type="ChEBI" id="CHEBI:58608"/>
    </ligand>
</feature>
<feature type="binding site" evidence="1">
    <location>
        <position position="615"/>
    </location>
    <ligand>
        <name>a 1,2-diacyl-sn-glycero-3-phosphate</name>
        <dbReference type="ChEBI" id="CHEBI:58608"/>
    </ligand>
</feature>
<feature type="binding site" evidence="1">
    <location>
        <position position="671"/>
    </location>
    <ligand>
        <name>Ca(2+)</name>
        <dbReference type="ChEBI" id="CHEBI:29108"/>
    </ligand>
</feature>
<proteinExistence type="evidence at transcript level"/>
<sequence length="762" mass="86770">MELEEQKKYFHGTLEITIFDATPFSPPFPFNCICTKPKAAYVTIKINKKKVAKTSSEYDRIWNQTFQILCAHPVTDTTITITLKTRCSVLGRFRISAEQILTSNSAVINGFFPLIADNGSTKRNLKLKCLMWFRPAYLEPGWCRALEEASFQGIRNASFPQRSNCRVVLYQDAHHKATFDPRVDDVPFNARNLWEDVYKAIESARHLVYIAGWALNPNLVLVRDNETEIPHAVGVTVGELLKRKSEEGVAVRVMLWNDETSLPMIKNKGVMRTNVERALAYFRNTNVVCRLCPRLHKKLPTAFAHHQKTITLDTRVTNSSTKEREIMSFLGGFDLCDGRYDTEEHSLFRTLGTEADFYQTSVAGAKLSRGGPREPWHDCHVSVVGGAAWDVLKNFEQRWTKQCNPSVLVNTSGIRNLVNLTGPTEENNRKWNVQVLRSIDHISATEMPRGLPVEKSVHDGYVAAIRKAERFIYIENQYFMGSCDHWESKNDKICSGCTNLIPVEIALKIAAKIRARERFAVYIVIPMWPEGPPESETVEEILHWTRETMSMMYQIIGEAIWEVGDKSHPRDYLNFFCLANREEKRDGEFEAVSSPHQKTHYWNAQRNRRFMVYVHSKLMIVDDTYILIGSANINQRSMDGCRDTEIAIGCYQTNTNNTNEIQAYRLSLWYEHTGGKITADDLSSSEPESLECVRGLRTIGEQMWEIYSGDKVVDMLGIHLVAYPISVTGDGAVEEVGDGCFPDTKTLVKGKRSKMFPPVLTT</sequence>
<organism>
    <name type="scientific">Arabidopsis thaliana</name>
    <name type="common">Mouse-ear cress</name>
    <dbReference type="NCBI Taxonomy" id="3702"/>
    <lineage>
        <taxon>Eukaryota</taxon>
        <taxon>Viridiplantae</taxon>
        <taxon>Streptophyta</taxon>
        <taxon>Embryophyta</taxon>
        <taxon>Tracheophyta</taxon>
        <taxon>Spermatophyta</taxon>
        <taxon>Magnoliopsida</taxon>
        <taxon>eudicotyledons</taxon>
        <taxon>Gunneridae</taxon>
        <taxon>Pentapetalae</taxon>
        <taxon>rosids</taxon>
        <taxon>malvids</taxon>
        <taxon>Brassicales</taxon>
        <taxon>Brassicaceae</taxon>
        <taxon>Camelineae</taxon>
        <taxon>Arabidopsis</taxon>
    </lineage>
</organism>
<name>PLDA4_ARATH</name>
<dbReference type="EC" id="3.1.4.4" evidence="1"/>
<dbReference type="EMBL" id="AC027034">
    <property type="protein sequence ID" value="AAG51567.1"/>
    <property type="molecule type" value="Genomic_DNA"/>
</dbReference>
<dbReference type="EMBL" id="CP002684">
    <property type="protein sequence ID" value="AEE33199.1"/>
    <property type="molecule type" value="Genomic_DNA"/>
</dbReference>
<dbReference type="PIR" id="E96593">
    <property type="entry name" value="E96593"/>
</dbReference>
<dbReference type="RefSeq" id="NP_175914.1">
    <property type="nucleotide sequence ID" value="NM_104391.2"/>
</dbReference>
<dbReference type="SMR" id="Q9C888"/>
<dbReference type="BioGRID" id="27186">
    <property type="interactions" value="1"/>
</dbReference>
<dbReference type="FunCoup" id="Q9C888">
    <property type="interactions" value="217"/>
</dbReference>
<dbReference type="IntAct" id="Q9C888">
    <property type="interactions" value="1"/>
</dbReference>
<dbReference type="STRING" id="3702.Q9C888"/>
<dbReference type="GlyGen" id="Q9C888">
    <property type="glycosylation" value="1 site"/>
</dbReference>
<dbReference type="PaxDb" id="3702-AT1G55180.1"/>
<dbReference type="ProteomicsDB" id="234967"/>
<dbReference type="EnsemblPlants" id="AT1G55180.1">
    <property type="protein sequence ID" value="AT1G55180.1"/>
    <property type="gene ID" value="AT1G55180"/>
</dbReference>
<dbReference type="GeneID" id="841961"/>
<dbReference type="Gramene" id="AT1G55180.1">
    <property type="protein sequence ID" value="AT1G55180.1"/>
    <property type="gene ID" value="AT1G55180"/>
</dbReference>
<dbReference type="KEGG" id="ath:AT1G55180"/>
<dbReference type="Araport" id="AT1G55180"/>
<dbReference type="TAIR" id="AT1G55180">
    <property type="gene designation" value="PLDEPSILON"/>
</dbReference>
<dbReference type="eggNOG" id="KOG1329">
    <property type="taxonomic scope" value="Eukaryota"/>
</dbReference>
<dbReference type="HOGENOM" id="CLU_004684_0_0_1"/>
<dbReference type="InParanoid" id="Q9C888"/>
<dbReference type="OrthoDB" id="14911at2759"/>
<dbReference type="PhylomeDB" id="Q9C888"/>
<dbReference type="BRENDA" id="3.1.4.4">
    <property type="organism ID" value="399"/>
</dbReference>
<dbReference type="PRO" id="PR:Q9C888"/>
<dbReference type="Proteomes" id="UP000006548">
    <property type="component" value="Chromosome 1"/>
</dbReference>
<dbReference type="ExpressionAtlas" id="Q9C888">
    <property type="expression patterns" value="baseline and differential"/>
</dbReference>
<dbReference type="GO" id="GO:0005886">
    <property type="term" value="C:plasma membrane"/>
    <property type="evidence" value="ECO:0000314"/>
    <property type="project" value="TAIR"/>
</dbReference>
<dbReference type="GO" id="GO:0005509">
    <property type="term" value="F:calcium ion binding"/>
    <property type="evidence" value="ECO:0007669"/>
    <property type="project" value="InterPro"/>
</dbReference>
<dbReference type="GO" id="GO:0004630">
    <property type="term" value="F:phospholipase D activity"/>
    <property type="evidence" value="ECO:0000314"/>
    <property type="project" value="TAIR"/>
</dbReference>
<dbReference type="GO" id="GO:0051301">
    <property type="term" value="P:cell division"/>
    <property type="evidence" value="ECO:0000315"/>
    <property type="project" value="TAIR"/>
</dbReference>
<dbReference type="GO" id="GO:0006995">
    <property type="term" value="P:cellular response to nitrogen starvation"/>
    <property type="evidence" value="ECO:0000315"/>
    <property type="project" value="TAIR"/>
</dbReference>
<dbReference type="GO" id="GO:0016036">
    <property type="term" value="P:cellular response to phosphate starvation"/>
    <property type="evidence" value="ECO:0000315"/>
    <property type="project" value="TAIR"/>
</dbReference>
<dbReference type="GO" id="GO:0051365">
    <property type="term" value="P:cellular response to potassium ion starvation"/>
    <property type="evidence" value="ECO:0000315"/>
    <property type="project" value="TAIR"/>
</dbReference>
<dbReference type="GO" id="GO:0009825">
    <property type="term" value="P:multidimensional cell growth"/>
    <property type="evidence" value="ECO:0000315"/>
    <property type="project" value="TAIR"/>
</dbReference>
<dbReference type="GO" id="GO:0046470">
    <property type="term" value="P:phosphatidylcholine metabolic process"/>
    <property type="evidence" value="ECO:0007669"/>
    <property type="project" value="InterPro"/>
</dbReference>
<dbReference type="GO" id="GO:0009395">
    <property type="term" value="P:phospholipid catabolic process"/>
    <property type="evidence" value="ECO:0000314"/>
    <property type="project" value="TAIR"/>
</dbReference>
<dbReference type="GO" id="GO:0045848">
    <property type="term" value="P:positive regulation of nitrogen utilization"/>
    <property type="evidence" value="ECO:0000315"/>
    <property type="project" value="TAIR"/>
</dbReference>
<dbReference type="GO" id="GO:0009791">
    <property type="term" value="P:post-embryonic development"/>
    <property type="evidence" value="ECO:0000315"/>
    <property type="project" value="TAIR"/>
</dbReference>
<dbReference type="GO" id="GO:0006970">
    <property type="term" value="P:response to osmotic stress"/>
    <property type="evidence" value="ECO:0000315"/>
    <property type="project" value="TAIR"/>
</dbReference>
<dbReference type="GO" id="GO:0048364">
    <property type="term" value="P:root development"/>
    <property type="evidence" value="ECO:0000315"/>
    <property type="project" value="TAIR"/>
</dbReference>
<dbReference type="CDD" id="cd09139">
    <property type="entry name" value="PLDc_pPLD_like_1"/>
    <property type="match status" value="1"/>
</dbReference>
<dbReference type="CDD" id="cd09142">
    <property type="entry name" value="PLDc_pPLD_like_2"/>
    <property type="match status" value="1"/>
</dbReference>
<dbReference type="Gene3D" id="2.60.40.150">
    <property type="entry name" value="C2 domain"/>
    <property type="match status" value="1"/>
</dbReference>
<dbReference type="Gene3D" id="3.30.870.10">
    <property type="entry name" value="Endonuclease Chain A"/>
    <property type="match status" value="2"/>
</dbReference>
<dbReference type="InterPro" id="IPR000008">
    <property type="entry name" value="C2_dom"/>
</dbReference>
<dbReference type="InterPro" id="IPR035892">
    <property type="entry name" value="C2_domain_sf"/>
</dbReference>
<dbReference type="InterPro" id="IPR001736">
    <property type="entry name" value="PLipase_D/transphosphatidylase"/>
</dbReference>
<dbReference type="InterPro" id="IPR024632">
    <property type="entry name" value="PLipase_D_C"/>
</dbReference>
<dbReference type="InterPro" id="IPR015679">
    <property type="entry name" value="PLipase_D_fam"/>
</dbReference>
<dbReference type="InterPro" id="IPR011402">
    <property type="entry name" value="PLipase_D_pln"/>
</dbReference>
<dbReference type="PANTHER" id="PTHR18896">
    <property type="entry name" value="PHOSPHOLIPASE D"/>
    <property type="match status" value="1"/>
</dbReference>
<dbReference type="PANTHER" id="PTHR18896:SF137">
    <property type="entry name" value="PHOSPHOLIPASE D ALPHA 4"/>
    <property type="match status" value="1"/>
</dbReference>
<dbReference type="Pfam" id="PF12357">
    <property type="entry name" value="PLD_C"/>
    <property type="match status" value="1"/>
</dbReference>
<dbReference type="Pfam" id="PF00614">
    <property type="entry name" value="PLDc"/>
    <property type="match status" value="1"/>
</dbReference>
<dbReference type="PIRSF" id="PIRSF036470">
    <property type="entry name" value="PLD_plant"/>
    <property type="match status" value="1"/>
</dbReference>
<dbReference type="SMART" id="SM00155">
    <property type="entry name" value="PLDc"/>
    <property type="match status" value="2"/>
</dbReference>
<dbReference type="SUPFAM" id="SSF49562">
    <property type="entry name" value="C2 domain (Calcium/lipid-binding domain, CaLB)"/>
    <property type="match status" value="1"/>
</dbReference>
<dbReference type="SUPFAM" id="SSF56024">
    <property type="entry name" value="Phospholipase D/nuclease"/>
    <property type="match status" value="2"/>
</dbReference>
<dbReference type="PROSITE" id="PS50004">
    <property type="entry name" value="C2"/>
    <property type="match status" value="1"/>
</dbReference>
<dbReference type="PROSITE" id="PS50035">
    <property type="entry name" value="PLD"/>
    <property type="match status" value="1"/>
</dbReference>
<gene>
    <name evidence="5" type="primary">PLDALPHA4</name>
    <name evidence="6" type="synonym">PLDEPSILON</name>
    <name evidence="8" type="ordered locus">At1g55180</name>
    <name evidence="9" type="ORF">F7A10.25</name>
</gene>
<reference key="1">
    <citation type="journal article" date="2000" name="Nature">
        <title>Sequence and analysis of chromosome 1 of the plant Arabidopsis thaliana.</title>
        <authorList>
            <person name="Theologis A."/>
            <person name="Ecker J.R."/>
            <person name="Palm C.J."/>
            <person name="Federspiel N.A."/>
            <person name="Kaul S."/>
            <person name="White O."/>
            <person name="Alonso J."/>
            <person name="Altafi H."/>
            <person name="Araujo R."/>
            <person name="Bowman C.L."/>
            <person name="Brooks S.Y."/>
            <person name="Buehler E."/>
            <person name="Chan A."/>
            <person name="Chao Q."/>
            <person name="Chen H."/>
            <person name="Cheuk R.F."/>
            <person name="Chin C.W."/>
            <person name="Chung M.K."/>
            <person name="Conn L."/>
            <person name="Conway A.B."/>
            <person name="Conway A.R."/>
            <person name="Creasy T.H."/>
            <person name="Dewar K."/>
            <person name="Dunn P."/>
            <person name="Etgu P."/>
            <person name="Feldblyum T.V."/>
            <person name="Feng J.-D."/>
            <person name="Fong B."/>
            <person name="Fujii C.Y."/>
            <person name="Gill J.E."/>
            <person name="Goldsmith A.D."/>
            <person name="Haas B."/>
            <person name="Hansen N.F."/>
            <person name="Hughes B."/>
            <person name="Huizar L."/>
            <person name="Hunter J.L."/>
            <person name="Jenkins J."/>
            <person name="Johnson-Hopson C."/>
            <person name="Khan S."/>
            <person name="Khaykin E."/>
            <person name="Kim C.J."/>
            <person name="Koo H.L."/>
            <person name="Kremenetskaia I."/>
            <person name="Kurtz D.B."/>
            <person name="Kwan A."/>
            <person name="Lam B."/>
            <person name="Langin-Hooper S."/>
            <person name="Lee A."/>
            <person name="Lee J.M."/>
            <person name="Lenz C.A."/>
            <person name="Li J.H."/>
            <person name="Li Y.-P."/>
            <person name="Lin X."/>
            <person name="Liu S.X."/>
            <person name="Liu Z.A."/>
            <person name="Luros J.S."/>
            <person name="Maiti R."/>
            <person name="Marziali A."/>
            <person name="Militscher J."/>
            <person name="Miranda M."/>
            <person name="Nguyen M."/>
            <person name="Nierman W.C."/>
            <person name="Osborne B.I."/>
            <person name="Pai G."/>
            <person name="Peterson J."/>
            <person name="Pham P.K."/>
            <person name="Rizzo M."/>
            <person name="Rooney T."/>
            <person name="Rowley D."/>
            <person name="Sakano H."/>
            <person name="Salzberg S.L."/>
            <person name="Schwartz J.R."/>
            <person name="Shinn P."/>
            <person name="Southwick A.M."/>
            <person name="Sun H."/>
            <person name="Tallon L.J."/>
            <person name="Tambunga G."/>
            <person name="Toriumi M.J."/>
            <person name="Town C.D."/>
            <person name="Utterback T."/>
            <person name="Van Aken S."/>
            <person name="Vaysberg M."/>
            <person name="Vysotskaia V.S."/>
            <person name="Walker M."/>
            <person name="Wu D."/>
            <person name="Yu G."/>
            <person name="Fraser C.M."/>
            <person name="Venter J.C."/>
            <person name="Davis R.W."/>
        </authorList>
    </citation>
    <scope>NUCLEOTIDE SEQUENCE [LARGE SCALE GENOMIC DNA]</scope>
    <source>
        <strain>cv. Columbia</strain>
    </source>
</reference>
<reference key="2">
    <citation type="journal article" date="2017" name="Plant J.">
        <title>Araport11: a complete reannotation of the Arabidopsis thaliana reference genome.</title>
        <authorList>
            <person name="Cheng C.Y."/>
            <person name="Krishnakumar V."/>
            <person name="Chan A.P."/>
            <person name="Thibaud-Nissen F."/>
            <person name="Schobel S."/>
            <person name="Town C.D."/>
        </authorList>
    </citation>
    <scope>GENOME REANNOTATION</scope>
    <source>
        <strain>cv. Columbia</strain>
    </source>
</reference>
<reference key="3">
    <citation type="journal article" date="2002" name="Plant Physiol.">
        <title>The Arabidopsis phospholipase D family. Characterization of a calcium-independent and phosphatidylcholine-selective PLD zeta 1 with distinct regulatory domains.</title>
        <authorList>
            <person name="Qin C."/>
            <person name="Wang X."/>
        </authorList>
    </citation>
    <scope>GENE FAMILY</scope>
    <scope>NOMENCLATURE</scope>
</reference>
<reference key="4">
    <citation type="journal article" date="2009" name="Plant J.">
        <title>Phospholipase D epsilon and phosphatidic acid enhance Arabidopsis nitrogen signaling and growth.</title>
        <authorList>
            <person name="Hong Y."/>
            <person name="Devaiah S.P."/>
            <person name="Bahn S.C."/>
            <person name="Thamasandra B.N."/>
            <person name="Li M."/>
            <person name="Welti R."/>
            <person name="Wang X."/>
        </authorList>
    </citation>
    <scope>FUNCTION</scope>
    <scope>TISSUE SPECIFICITY</scope>
    <scope>SUBCELLULAR LOCATION</scope>
    <scope>DISRUPTION PHENOTYPE</scope>
</reference>
<comment type="function">
    <text evidence="4">Hydrolyzes glycerol-phospholipids at the terminal phosphodiesteric bond to generate phosphatidic acids (PA). Promotes growth and plays a role in nitrogen signaling.</text>
</comment>
<comment type="catalytic activity">
    <reaction evidence="1">
        <text>a 1,2-diacyl-sn-glycero-3-phosphocholine + H2O = a 1,2-diacyl-sn-glycero-3-phosphate + choline + H(+)</text>
        <dbReference type="Rhea" id="RHEA:14445"/>
        <dbReference type="ChEBI" id="CHEBI:15354"/>
        <dbReference type="ChEBI" id="CHEBI:15377"/>
        <dbReference type="ChEBI" id="CHEBI:15378"/>
        <dbReference type="ChEBI" id="CHEBI:57643"/>
        <dbReference type="ChEBI" id="CHEBI:58608"/>
        <dbReference type="EC" id="3.1.4.4"/>
    </reaction>
</comment>
<comment type="cofactor">
    <cofactor evidence="1">
        <name>Ca(2+)</name>
        <dbReference type="ChEBI" id="CHEBI:29108"/>
    </cofactor>
</comment>
<comment type="subcellular location">
    <subcellularLocation>
        <location evidence="4">Cell membrane</location>
    </subcellularLocation>
</comment>
<comment type="tissue specificity">
    <text evidence="4">Expressed in roots, leaves, stems, siliques,flowers and inflorescences.</text>
</comment>
<comment type="domain">
    <text evidence="7">C2 domain is a calcium-binding fold, and the binding promotes the protein association with membranes.</text>
</comment>
<comment type="disruption phenotype">
    <text evidence="4">Reduced growth.</text>
</comment>
<comment type="similarity">
    <text evidence="7">Belongs to the phospholipase D family. C2-PLD subfamily.</text>
</comment>
<accession>Q9C888</accession>
<protein>
    <recommendedName>
        <fullName evidence="5">Phospholipase D alpha 4</fullName>
        <shortName evidence="5">AtPLDalpha4</shortName>
        <shortName evidence="5">PLD alpha 4</shortName>
        <ecNumber evidence="1">3.1.4.4</ecNumber>
    </recommendedName>
    <alternativeName>
        <fullName>PLDalpha3</fullName>
    </alternativeName>
    <alternativeName>
        <fullName evidence="6">Phospholipase D epsilon</fullName>
        <shortName evidence="6">AtPLDepsilon</shortName>
        <shortName evidence="6">PLD epsilon</shortName>
    </alternativeName>
</protein>
<evidence type="ECO:0000250" key="1">
    <source>
        <dbReference type="UniProtKB" id="Q38882"/>
    </source>
</evidence>
<evidence type="ECO:0000255" key="2">
    <source>
        <dbReference type="PROSITE-ProRule" id="PRU00041"/>
    </source>
</evidence>
<evidence type="ECO:0000255" key="3">
    <source>
        <dbReference type="PROSITE-ProRule" id="PRU00153"/>
    </source>
</evidence>
<evidence type="ECO:0000269" key="4">
    <source>
    </source>
</evidence>
<evidence type="ECO:0000303" key="5">
    <source>
    </source>
</evidence>
<evidence type="ECO:0000303" key="6">
    <source>
    </source>
</evidence>
<evidence type="ECO:0000305" key="7"/>
<evidence type="ECO:0000312" key="8">
    <source>
        <dbReference type="Araport" id="AT1G55180"/>
    </source>
</evidence>
<evidence type="ECO:0000312" key="9">
    <source>
        <dbReference type="EMBL" id="AAG51567.1"/>
    </source>
</evidence>